<protein>
    <recommendedName>
        <fullName>C-type lectin domain family 1 member A</fullName>
    </recommendedName>
</protein>
<accession>Q8BWY2</accession>
<accession>Q7TPX7</accession>
<accession>Q8BMH5</accession>
<sequence>MQAKYSSTRDMLDDDDTTISLYSGTSTVTRRAEPRHSENGTPSSVWRPVALTLLTLCLVLLVGLAALGLVFFQFYQLSNIQQDSITEKDEKLGNMSRQLQSLQAQNRKLIETLQQVAVKLCRELYNKSGGHRCSPCPEKWKWYGDKCYQFYKESKNWQSCEYFCLADNATMLKISTQEELDFAMPQSYSEFFYSYWTGLSRNGSGKAWLWTDGTPYSFELFEIIIDPTNLRNRDCMTIFNGKAYSKDCKELRRCACERIAGRVVPGELQ</sequence>
<feature type="chain" id="PRO_0000046610" description="C-type lectin domain family 1 member A">
    <location>
        <begin position="1"/>
        <end position="269"/>
    </location>
</feature>
<feature type="topological domain" description="Cytoplasmic" evidence="1">
    <location>
        <begin position="1"/>
        <end position="51"/>
    </location>
</feature>
<feature type="transmembrane region" description="Helical; Signal-anchor for type II membrane protein" evidence="1">
    <location>
        <begin position="52"/>
        <end position="72"/>
    </location>
</feature>
<feature type="topological domain" description="Extracellular" evidence="1">
    <location>
        <begin position="73"/>
        <end position="269"/>
    </location>
</feature>
<feature type="domain" description="C-type lectin" evidence="2">
    <location>
        <begin position="143"/>
        <end position="257"/>
    </location>
</feature>
<feature type="glycosylation site" description="N-linked (GlcNAc...) asparagine" evidence="1">
    <location>
        <position position="94"/>
    </location>
</feature>
<feature type="glycosylation site" description="N-linked (GlcNAc...) asparagine" evidence="1">
    <location>
        <position position="126"/>
    </location>
</feature>
<feature type="glycosylation site" description="N-linked (GlcNAc...) asparagine" evidence="1">
    <location>
        <position position="168"/>
    </location>
</feature>
<feature type="glycosylation site" description="N-linked (GlcNAc...) asparagine" evidence="1">
    <location>
        <position position="202"/>
    </location>
</feature>
<feature type="disulfide bond" evidence="2">
    <location>
        <begin position="164"/>
        <end position="256"/>
    </location>
</feature>
<feature type="disulfide bond" evidence="2">
    <location>
        <begin position="235"/>
        <end position="248"/>
    </location>
</feature>
<feature type="sequence conflict" description="In Ref. 2; AAH52840." evidence="3" ref="2">
    <original>S</original>
    <variation>G</variation>
    <location>
        <position position="6"/>
    </location>
</feature>
<feature type="sequence conflict" description="In Ref. 1; BAC27264." evidence="3" ref="1">
    <original>E</original>
    <variation>Q</variation>
    <location>
        <position position="222"/>
    </location>
</feature>
<feature type="sequence conflict" description="In Ref. 1; BAC27264." evidence="3" ref="1">
    <original>T</original>
    <variation>N</variation>
    <location>
        <position position="228"/>
    </location>
</feature>
<organism>
    <name type="scientific">Mus musculus</name>
    <name type="common">Mouse</name>
    <dbReference type="NCBI Taxonomy" id="10090"/>
    <lineage>
        <taxon>Eukaryota</taxon>
        <taxon>Metazoa</taxon>
        <taxon>Chordata</taxon>
        <taxon>Craniata</taxon>
        <taxon>Vertebrata</taxon>
        <taxon>Euteleostomi</taxon>
        <taxon>Mammalia</taxon>
        <taxon>Eutheria</taxon>
        <taxon>Euarchontoglires</taxon>
        <taxon>Glires</taxon>
        <taxon>Rodentia</taxon>
        <taxon>Myomorpha</taxon>
        <taxon>Muroidea</taxon>
        <taxon>Muridae</taxon>
        <taxon>Murinae</taxon>
        <taxon>Mus</taxon>
        <taxon>Mus</taxon>
    </lineage>
</organism>
<gene>
    <name type="primary">Clec1a</name>
</gene>
<evidence type="ECO:0000255" key="1"/>
<evidence type="ECO:0000255" key="2">
    <source>
        <dbReference type="PROSITE-ProRule" id="PRU00040"/>
    </source>
</evidence>
<evidence type="ECO:0000305" key="3"/>
<proteinExistence type="evidence at protein level"/>
<reference key="1">
    <citation type="journal article" date="2005" name="Science">
        <title>The transcriptional landscape of the mammalian genome.</title>
        <authorList>
            <person name="Carninci P."/>
            <person name="Kasukawa T."/>
            <person name="Katayama S."/>
            <person name="Gough J."/>
            <person name="Frith M.C."/>
            <person name="Maeda N."/>
            <person name="Oyama R."/>
            <person name="Ravasi T."/>
            <person name="Lenhard B."/>
            <person name="Wells C."/>
            <person name="Kodzius R."/>
            <person name="Shimokawa K."/>
            <person name="Bajic V.B."/>
            <person name="Brenner S.E."/>
            <person name="Batalov S."/>
            <person name="Forrest A.R."/>
            <person name="Zavolan M."/>
            <person name="Davis M.J."/>
            <person name="Wilming L.G."/>
            <person name="Aidinis V."/>
            <person name="Allen J.E."/>
            <person name="Ambesi-Impiombato A."/>
            <person name="Apweiler R."/>
            <person name="Aturaliya R.N."/>
            <person name="Bailey T.L."/>
            <person name="Bansal M."/>
            <person name="Baxter L."/>
            <person name="Beisel K.W."/>
            <person name="Bersano T."/>
            <person name="Bono H."/>
            <person name="Chalk A.M."/>
            <person name="Chiu K.P."/>
            <person name="Choudhary V."/>
            <person name="Christoffels A."/>
            <person name="Clutterbuck D.R."/>
            <person name="Crowe M.L."/>
            <person name="Dalla E."/>
            <person name="Dalrymple B.P."/>
            <person name="de Bono B."/>
            <person name="Della Gatta G."/>
            <person name="di Bernardo D."/>
            <person name="Down T."/>
            <person name="Engstrom P."/>
            <person name="Fagiolini M."/>
            <person name="Faulkner G."/>
            <person name="Fletcher C.F."/>
            <person name="Fukushima T."/>
            <person name="Furuno M."/>
            <person name="Futaki S."/>
            <person name="Gariboldi M."/>
            <person name="Georgii-Hemming P."/>
            <person name="Gingeras T.R."/>
            <person name="Gojobori T."/>
            <person name="Green R.E."/>
            <person name="Gustincich S."/>
            <person name="Harbers M."/>
            <person name="Hayashi Y."/>
            <person name="Hensch T.K."/>
            <person name="Hirokawa N."/>
            <person name="Hill D."/>
            <person name="Huminiecki L."/>
            <person name="Iacono M."/>
            <person name="Ikeo K."/>
            <person name="Iwama A."/>
            <person name="Ishikawa T."/>
            <person name="Jakt M."/>
            <person name="Kanapin A."/>
            <person name="Katoh M."/>
            <person name="Kawasawa Y."/>
            <person name="Kelso J."/>
            <person name="Kitamura H."/>
            <person name="Kitano H."/>
            <person name="Kollias G."/>
            <person name="Krishnan S.P."/>
            <person name="Kruger A."/>
            <person name="Kummerfeld S.K."/>
            <person name="Kurochkin I.V."/>
            <person name="Lareau L.F."/>
            <person name="Lazarevic D."/>
            <person name="Lipovich L."/>
            <person name="Liu J."/>
            <person name="Liuni S."/>
            <person name="McWilliam S."/>
            <person name="Madan Babu M."/>
            <person name="Madera M."/>
            <person name="Marchionni L."/>
            <person name="Matsuda H."/>
            <person name="Matsuzawa S."/>
            <person name="Miki H."/>
            <person name="Mignone F."/>
            <person name="Miyake S."/>
            <person name="Morris K."/>
            <person name="Mottagui-Tabar S."/>
            <person name="Mulder N."/>
            <person name="Nakano N."/>
            <person name="Nakauchi H."/>
            <person name="Ng P."/>
            <person name="Nilsson R."/>
            <person name="Nishiguchi S."/>
            <person name="Nishikawa S."/>
            <person name="Nori F."/>
            <person name="Ohara O."/>
            <person name="Okazaki Y."/>
            <person name="Orlando V."/>
            <person name="Pang K.C."/>
            <person name="Pavan W.J."/>
            <person name="Pavesi G."/>
            <person name="Pesole G."/>
            <person name="Petrovsky N."/>
            <person name="Piazza S."/>
            <person name="Reed J."/>
            <person name="Reid J.F."/>
            <person name="Ring B.Z."/>
            <person name="Ringwald M."/>
            <person name="Rost B."/>
            <person name="Ruan Y."/>
            <person name="Salzberg S.L."/>
            <person name="Sandelin A."/>
            <person name="Schneider C."/>
            <person name="Schoenbach C."/>
            <person name="Sekiguchi K."/>
            <person name="Semple C.A."/>
            <person name="Seno S."/>
            <person name="Sessa L."/>
            <person name="Sheng Y."/>
            <person name="Shibata Y."/>
            <person name="Shimada H."/>
            <person name="Shimada K."/>
            <person name="Silva D."/>
            <person name="Sinclair B."/>
            <person name="Sperling S."/>
            <person name="Stupka E."/>
            <person name="Sugiura K."/>
            <person name="Sultana R."/>
            <person name="Takenaka Y."/>
            <person name="Taki K."/>
            <person name="Tammoja K."/>
            <person name="Tan S.L."/>
            <person name="Tang S."/>
            <person name="Taylor M.S."/>
            <person name="Tegner J."/>
            <person name="Teichmann S.A."/>
            <person name="Ueda H.R."/>
            <person name="van Nimwegen E."/>
            <person name="Verardo R."/>
            <person name="Wei C.L."/>
            <person name="Yagi K."/>
            <person name="Yamanishi H."/>
            <person name="Zabarovsky E."/>
            <person name="Zhu S."/>
            <person name="Zimmer A."/>
            <person name="Hide W."/>
            <person name="Bult C."/>
            <person name="Grimmond S.M."/>
            <person name="Teasdale R.D."/>
            <person name="Liu E.T."/>
            <person name="Brusic V."/>
            <person name="Quackenbush J."/>
            <person name="Wahlestedt C."/>
            <person name="Mattick J.S."/>
            <person name="Hume D.A."/>
            <person name="Kai C."/>
            <person name="Sasaki D."/>
            <person name="Tomaru Y."/>
            <person name="Fukuda S."/>
            <person name="Kanamori-Katayama M."/>
            <person name="Suzuki M."/>
            <person name="Aoki J."/>
            <person name="Arakawa T."/>
            <person name="Iida J."/>
            <person name="Imamura K."/>
            <person name="Itoh M."/>
            <person name="Kato T."/>
            <person name="Kawaji H."/>
            <person name="Kawagashira N."/>
            <person name="Kawashima T."/>
            <person name="Kojima M."/>
            <person name="Kondo S."/>
            <person name="Konno H."/>
            <person name="Nakano K."/>
            <person name="Ninomiya N."/>
            <person name="Nishio T."/>
            <person name="Okada M."/>
            <person name="Plessy C."/>
            <person name="Shibata K."/>
            <person name="Shiraki T."/>
            <person name="Suzuki S."/>
            <person name="Tagami M."/>
            <person name="Waki K."/>
            <person name="Watahiki A."/>
            <person name="Okamura-Oho Y."/>
            <person name="Suzuki H."/>
            <person name="Kawai J."/>
            <person name="Hayashizaki Y."/>
        </authorList>
    </citation>
    <scope>NUCLEOTIDE SEQUENCE [LARGE SCALE MRNA]</scope>
    <source>
        <strain>C57BL/6J</strain>
        <tissue>Forelimb</tissue>
        <tissue>Spinal cord</tissue>
    </source>
</reference>
<reference key="2">
    <citation type="journal article" date="2004" name="Genome Res.">
        <title>The status, quality, and expansion of the NIH full-length cDNA project: the Mammalian Gene Collection (MGC).</title>
        <authorList>
            <consortium name="The MGC Project Team"/>
        </authorList>
    </citation>
    <scope>NUCLEOTIDE SEQUENCE [LARGE SCALE MRNA]</scope>
    <source>
        <strain>C57BL/6J</strain>
        <tissue>Egg</tissue>
    </source>
</reference>
<reference key="3">
    <citation type="journal article" date="2010" name="Cell">
        <title>A tissue-specific atlas of mouse protein phosphorylation and expression.</title>
        <authorList>
            <person name="Huttlin E.L."/>
            <person name="Jedrychowski M.P."/>
            <person name="Elias J.E."/>
            <person name="Goswami T."/>
            <person name="Rad R."/>
            <person name="Beausoleil S.A."/>
            <person name="Villen J."/>
            <person name="Haas W."/>
            <person name="Sowa M.E."/>
            <person name="Gygi S.P."/>
        </authorList>
    </citation>
    <scope>IDENTIFICATION BY MASS SPECTROMETRY [LARGE SCALE ANALYSIS]</scope>
    <source>
        <tissue>Lung</tissue>
    </source>
</reference>
<comment type="subcellular location">
    <subcellularLocation>
        <location evidence="3">Membrane</location>
        <topology evidence="3">Single-pass type II membrane protein</topology>
    </subcellularLocation>
</comment>
<name>CLC1A_MOUSE</name>
<keyword id="KW-1015">Disulfide bond</keyword>
<keyword id="KW-0325">Glycoprotein</keyword>
<keyword id="KW-0430">Lectin</keyword>
<keyword id="KW-0472">Membrane</keyword>
<keyword id="KW-1185">Reference proteome</keyword>
<keyword id="KW-0735">Signal-anchor</keyword>
<keyword id="KW-0812">Transmembrane</keyword>
<keyword id="KW-1133">Transmembrane helix</keyword>
<dbReference type="EMBL" id="AK031121">
    <property type="protein sequence ID" value="BAC27264.1"/>
    <property type="molecule type" value="mRNA"/>
</dbReference>
<dbReference type="EMBL" id="AK049608">
    <property type="protein sequence ID" value="BAC33840.1"/>
    <property type="molecule type" value="mRNA"/>
</dbReference>
<dbReference type="EMBL" id="BC052840">
    <property type="protein sequence ID" value="AAH52840.1"/>
    <property type="molecule type" value="mRNA"/>
</dbReference>
<dbReference type="CCDS" id="CCDS20587.1"/>
<dbReference type="RefSeq" id="NP_001334404.1">
    <property type="nucleotide sequence ID" value="NM_001347475.1"/>
</dbReference>
<dbReference type="RefSeq" id="NP_780735.2">
    <property type="nucleotide sequence ID" value="NM_175526.3"/>
</dbReference>
<dbReference type="SMR" id="Q8BWY2"/>
<dbReference type="FunCoup" id="Q8BWY2">
    <property type="interactions" value="20"/>
</dbReference>
<dbReference type="STRING" id="10090.ENSMUSP00000047065"/>
<dbReference type="GlyCosmos" id="Q8BWY2">
    <property type="glycosylation" value="4 sites, No reported glycans"/>
</dbReference>
<dbReference type="GlyGen" id="Q8BWY2">
    <property type="glycosylation" value="4 sites"/>
</dbReference>
<dbReference type="iPTMnet" id="Q8BWY2"/>
<dbReference type="PhosphoSitePlus" id="Q8BWY2"/>
<dbReference type="PaxDb" id="10090-ENSMUSP00000047065"/>
<dbReference type="ProteomicsDB" id="279099"/>
<dbReference type="Antibodypedia" id="23227">
    <property type="antibodies" value="226 antibodies from 26 providers"/>
</dbReference>
<dbReference type="DNASU" id="243653"/>
<dbReference type="Ensembl" id="ENSMUST00000037481.10">
    <property type="protein sequence ID" value="ENSMUSP00000047065.8"/>
    <property type="gene ID" value="ENSMUSG00000033082.11"/>
</dbReference>
<dbReference type="GeneID" id="243653"/>
<dbReference type="KEGG" id="mmu:243653"/>
<dbReference type="UCSC" id="uc009eft.2">
    <property type="organism name" value="mouse"/>
</dbReference>
<dbReference type="AGR" id="MGI:2444151"/>
<dbReference type="CTD" id="51267"/>
<dbReference type="MGI" id="MGI:2444151">
    <property type="gene designation" value="Clec1a"/>
</dbReference>
<dbReference type="VEuPathDB" id="HostDB:ENSMUSG00000033082"/>
<dbReference type="eggNOG" id="KOG4297">
    <property type="taxonomic scope" value="Eukaryota"/>
</dbReference>
<dbReference type="GeneTree" id="ENSGT00940000161945"/>
<dbReference type="HOGENOM" id="CLU_049894_8_0_1"/>
<dbReference type="InParanoid" id="Q8BWY2"/>
<dbReference type="OMA" id="GWYWEDG"/>
<dbReference type="OrthoDB" id="418245at2759"/>
<dbReference type="PhylomeDB" id="Q8BWY2"/>
<dbReference type="TreeFam" id="TF336674"/>
<dbReference type="BioGRID-ORCS" id="243653">
    <property type="hits" value="1 hit in 77 CRISPR screens"/>
</dbReference>
<dbReference type="ChiTaRS" id="Clec1a">
    <property type="organism name" value="mouse"/>
</dbReference>
<dbReference type="PRO" id="PR:Q8BWY2"/>
<dbReference type="Proteomes" id="UP000000589">
    <property type="component" value="Chromosome 6"/>
</dbReference>
<dbReference type="RNAct" id="Q8BWY2">
    <property type="molecule type" value="protein"/>
</dbReference>
<dbReference type="Bgee" id="ENSMUSG00000033082">
    <property type="expression patterns" value="Expressed in left lung lobe and 114 other cell types or tissues"/>
</dbReference>
<dbReference type="ExpressionAtlas" id="Q8BWY2">
    <property type="expression patterns" value="baseline and differential"/>
</dbReference>
<dbReference type="GO" id="GO:0016020">
    <property type="term" value="C:membrane"/>
    <property type="evidence" value="ECO:0007669"/>
    <property type="project" value="UniProtKB-SubCell"/>
</dbReference>
<dbReference type="GO" id="GO:0030246">
    <property type="term" value="F:carbohydrate binding"/>
    <property type="evidence" value="ECO:0007669"/>
    <property type="project" value="UniProtKB-KW"/>
</dbReference>
<dbReference type="CDD" id="cd03593">
    <property type="entry name" value="CLECT_NK_receptors_like"/>
    <property type="match status" value="1"/>
</dbReference>
<dbReference type="Gene3D" id="3.10.100.10">
    <property type="entry name" value="Mannose-Binding Protein A, subunit A"/>
    <property type="match status" value="1"/>
</dbReference>
<dbReference type="InterPro" id="IPR001304">
    <property type="entry name" value="C-type_lectin-like"/>
</dbReference>
<dbReference type="InterPro" id="IPR016186">
    <property type="entry name" value="C-type_lectin-like/link_sf"/>
</dbReference>
<dbReference type="InterPro" id="IPR052309">
    <property type="entry name" value="C-type_Lectin_Domain_Fam1"/>
</dbReference>
<dbReference type="InterPro" id="IPR016187">
    <property type="entry name" value="CTDL_fold"/>
</dbReference>
<dbReference type="InterPro" id="IPR033992">
    <property type="entry name" value="NKR-like_CTLD"/>
</dbReference>
<dbReference type="PANTHER" id="PTHR46490:SF1">
    <property type="entry name" value="C-TYPE LECTIN DOMAIN FAMILY 1 MEMBER A"/>
    <property type="match status" value="1"/>
</dbReference>
<dbReference type="PANTHER" id="PTHR46490">
    <property type="entry name" value="C-TYPE LECTIN DOMAIN FAMILY 12 MEMBER A-RELATED"/>
    <property type="match status" value="1"/>
</dbReference>
<dbReference type="Pfam" id="PF00059">
    <property type="entry name" value="Lectin_C"/>
    <property type="match status" value="1"/>
</dbReference>
<dbReference type="SMART" id="SM00034">
    <property type="entry name" value="CLECT"/>
    <property type="match status" value="1"/>
</dbReference>
<dbReference type="SUPFAM" id="SSF56436">
    <property type="entry name" value="C-type lectin-like"/>
    <property type="match status" value="1"/>
</dbReference>
<dbReference type="PROSITE" id="PS50041">
    <property type="entry name" value="C_TYPE_LECTIN_2"/>
    <property type="match status" value="1"/>
</dbReference>